<comment type="subcellular location">
    <subcellularLocation>
        <location evidence="1">Cytoplasm</location>
    </subcellularLocation>
</comment>
<comment type="similarity">
    <text evidence="1">Belongs to the TACO1 family.</text>
</comment>
<evidence type="ECO:0000255" key="1">
    <source>
        <dbReference type="HAMAP-Rule" id="MF_00693"/>
    </source>
</evidence>
<evidence type="ECO:0000256" key="2">
    <source>
        <dbReference type="SAM" id="MobiDB-lite"/>
    </source>
</evidence>
<dbReference type="EMBL" id="CR555306">
    <property type="protein sequence ID" value="CAI08197.1"/>
    <property type="molecule type" value="Genomic_DNA"/>
</dbReference>
<dbReference type="RefSeq" id="WP_011237890.1">
    <property type="nucleotide sequence ID" value="NC_006513.1"/>
</dbReference>
<dbReference type="SMR" id="Q5P3B7"/>
<dbReference type="STRING" id="76114.ebA3674"/>
<dbReference type="KEGG" id="eba:ebA3674"/>
<dbReference type="eggNOG" id="COG0217">
    <property type="taxonomic scope" value="Bacteria"/>
</dbReference>
<dbReference type="HOGENOM" id="CLU_062974_2_2_4"/>
<dbReference type="OrthoDB" id="9781053at2"/>
<dbReference type="Proteomes" id="UP000006552">
    <property type="component" value="Chromosome"/>
</dbReference>
<dbReference type="GO" id="GO:0005829">
    <property type="term" value="C:cytosol"/>
    <property type="evidence" value="ECO:0007669"/>
    <property type="project" value="TreeGrafter"/>
</dbReference>
<dbReference type="GO" id="GO:0003677">
    <property type="term" value="F:DNA binding"/>
    <property type="evidence" value="ECO:0007669"/>
    <property type="project" value="UniProtKB-UniRule"/>
</dbReference>
<dbReference type="GO" id="GO:0006355">
    <property type="term" value="P:regulation of DNA-templated transcription"/>
    <property type="evidence" value="ECO:0007669"/>
    <property type="project" value="UniProtKB-UniRule"/>
</dbReference>
<dbReference type="FunFam" id="1.10.10.200:FF:000001">
    <property type="entry name" value="Probable transcriptional regulatory protein YebC"/>
    <property type="match status" value="1"/>
</dbReference>
<dbReference type="FunFam" id="3.30.70.980:FF:000002">
    <property type="entry name" value="Probable transcriptional regulatory protein YebC"/>
    <property type="match status" value="1"/>
</dbReference>
<dbReference type="Gene3D" id="1.10.10.200">
    <property type="match status" value="1"/>
</dbReference>
<dbReference type="Gene3D" id="3.30.70.980">
    <property type="match status" value="2"/>
</dbReference>
<dbReference type="HAMAP" id="MF_00693">
    <property type="entry name" value="Transcrip_reg_TACO1"/>
    <property type="match status" value="1"/>
</dbReference>
<dbReference type="InterPro" id="IPR017856">
    <property type="entry name" value="Integrase-like_N"/>
</dbReference>
<dbReference type="InterPro" id="IPR048300">
    <property type="entry name" value="TACO1_YebC-like_2nd/3rd_dom"/>
</dbReference>
<dbReference type="InterPro" id="IPR049083">
    <property type="entry name" value="TACO1_YebC_N"/>
</dbReference>
<dbReference type="InterPro" id="IPR002876">
    <property type="entry name" value="Transcrip_reg_TACO1-like"/>
</dbReference>
<dbReference type="InterPro" id="IPR026564">
    <property type="entry name" value="Transcrip_reg_TACO1-like_dom3"/>
</dbReference>
<dbReference type="InterPro" id="IPR029072">
    <property type="entry name" value="YebC-like"/>
</dbReference>
<dbReference type="NCBIfam" id="NF001030">
    <property type="entry name" value="PRK00110.1"/>
    <property type="match status" value="1"/>
</dbReference>
<dbReference type="NCBIfam" id="NF009044">
    <property type="entry name" value="PRK12378.1"/>
    <property type="match status" value="1"/>
</dbReference>
<dbReference type="NCBIfam" id="TIGR01033">
    <property type="entry name" value="YebC/PmpR family DNA-binding transcriptional regulator"/>
    <property type="match status" value="1"/>
</dbReference>
<dbReference type="PANTHER" id="PTHR12532:SF6">
    <property type="entry name" value="TRANSCRIPTIONAL REGULATORY PROTEIN YEBC-RELATED"/>
    <property type="match status" value="1"/>
</dbReference>
<dbReference type="PANTHER" id="PTHR12532">
    <property type="entry name" value="TRANSLATIONAL ACTIVATOR OF CYTOCHROME C OXIDASE 1"/>
    <property type="match status" value="1"/>
</dbReference>
<dbReference type="Pfam" id="PF20772">
    <property type="entry name" value="TACO1_YebC_N"/>
    <property type="match status" value="1"/>
</dbReference>
<dbReference type="Pfam" id="PF01709">
    <property type="entry name" value="Transcrip_reg"/>
    <property type="match status" value="1"/>
</dbReference>
<dbReference type="SUPFAM" id="SSF75625">
    <property type="entry name" value="YebC-like"/>
    <property type="match status" value="1"/>
</dbReference>
<accession>Q5P3B7</accession>
<reference key="1">
    <citation type="journal article" date="2005" name="Arch. Microbiol.">
        <title>The genome sequence of an anaerobic aromatic-degrading denitrifying bacterium, strain EbN1.</title>
        <authorList>
            <person name="Rabus R."/>
            <person name="Kube M."/>
            <person name="Heider J."/>
            <person name="Beck A."/>
            <person name="Heitmann K."/>
            <person name="Widdel F."/>
            <person name="Reinhardt R."/>
        </authorList>
    </citation>
    <scope>NUCLEOTIDE SEQUENCE [LARGE SCALE GENOMIC DNA]</scope>
    <source>
        <strain>DSM 19018 / LMG 30748 / EbN1</strain>
    </source>
</reference>
<sequence length="241" mass="26180">MAGHSKWANIQHRKGRQDAKRGKVFTKLIKEITVAARMGGGDPNFNPRLRLAVDKAKAENMPSENIDRAIKRGTGELDGVSYEEARYEGYGIGGAAVMVDCLTDNKTRTVADVRHAFSKNGGNMGTDGCVAFQFKHCGQLMFAPGTSEDALMEAALEAGAEDVVTNDDGSIEVITAPYEYSNVKDALEKASFRAEFGEVTMKPQNETELSGGDAERMQKLLDALESLDDVQEVYTSAVMDE</sequence>
<name>Y2072_AROAE</name>
<proteinExistence type="inferred from homology"/>
<gene>
    <name type="ordered locus">AZOSEA20720</name>
    <name type="ORF">ebA3674</name>
</gene>
<feature type="chain" id="PRO_0000175751" description="Probable transcriptional regulatory protein AZOSEA20720">
    <location>
        <begin position="1"/>
        <end position="241"/>
    </location>
</feature>
<feature type="region of interest" description="Disordered" evidence="2">
    <location>
        <begin position="1"/>
        <end position="21"/>
    </location>
</feature>
<protein>
    <recommendedName>
        <fullName evidence="1">Probable transcriptional regulatory protein AZOSEA20720</fullName>
    </recommendedName>
</protein>
<keyword id="KW-0963">Cytoplasm</keyword>
<keyword id="KW-0238">DNA-binding</keyword>
<keyword id="KW-1185">Reference proteome</keyword>
<keyword id="KW-0804">Transcription</keyword>
<keyword id="KW-0805">Transcription regulation</keyword>
<organism>
    <name type="scientific">Aromatoleum aromaticum (strain DSM 19018 / LMG 30748 / EbN1)</name>
    <name type="common">Azoarcus sp. (strain EbN1)</name>
    <dbReference type="NCBI Taxonomy" id="76114"/>
    <lineage>
        <taxon>Bacteria</taxon>
        <taxon>Pseudomonadati</taxon>
        <taxon>Pseudomonadota</taxon>
        <taxon>Betaproteobacteria</taxon>
        <taxon>Rhodocyclales</taxon>
        <taxon>Rhodocyclaceae</taxon>
        <taxon>Aromatoleum</taxon>
    </lineage>
</organism>